<name>Y3678_SACD2</name>
<evidence type="ECO:0000255" key="1">
    <source>
        <dbReference type="PROSITE-ProRule" id="PRU01182"/>
    </source>
</evidence>
<evidence type="ECO:0000305" key="2"/>
<dbReference type="EMBL" id="CP000282">
    <property type="protein sequence ID" value="ABD82933.1"/>
    <property type="molecule type" value="Genomic_DNA"/>
</dbReference>
<dbReference type="RefSeq" id="WP_011470148.1">
    <property type="nucleotide sequence ID" value="NC_007912.1"/>
</dbReference>
<dbReference type="SMR" id="Q21EE6"/>
<dbReference type="STRING" id="203122.Sde_3678"/>
<dbReference type="GeneID" id="98615288"/>
<dbReference type="KEGG" id="sde:Sde_3678"/>
<dbReference type="eggNOG" id="COG2003">
    <property type="taxonomic scope" value="Bacteria"/>
</dbReference>
<dbReference type="HOGENOM" id="CLU_073529_0_1_6"/>
<dbReference type="OrthoDB" id="9804482at2"/>
<dbReference type="Proteomes" id="UP000001947">
    <property type="component" value="Chromosome"/>
</dbReference>
<dbReference type="GO" id="GO:0046872">
    <property type="term" value="F:metal ion binding"/>
    <property type="evidence" value="ECO:0007669"/>
    <property type="project" value="UniProtKB-KW"/>
</dbReference>
<dbReference type="GO" id="GO:0008237">
    <property type="term" value="F:metallopeptidase activity"/>
    <property type="evidence" value="ECO:0007669"/>
    <property type="project" value="UniProtKB-KW"/>
</dbReference>
<dbReference type="GO" id="GO:0006508">
    <property type="term" value="P:proteolysis"/>
    <property type="evidence" value="ECO:0007669"/>
    <property type="project" value="UniProtKB-KW"/>
</dbReference>
<dbReference type="CDD" id="cd08071">
    <property type="entry name" value="MPN_DUF2466"/>
    <property type="match status" value="1"/>
</dbReference>
<dbReference type="Gene3D" id="3.40.140.10">
    <property type="entry name" value="Cytidine Deaminase, domain 2"/>
    <property type="match status" value="1"/>
</dbReference>
<dbReference type="InterPro" id="IPR037518">
    <property type="entry name" value="MPN"/>
</dbReference>
<dbReference type="InterPro" id="IPR025657">
    <property type="entry name" value="RadC_JAB"/>
</dbReference>
<dbReference type="InterPro" id="IPR010994">
    <property type="entry name" value="RuvA_2-like"/>
</dbReference>
<dbReference type="InterPro" id="IPR001405">
    <property type="entry name" value="UPF0758"/>
</dbReference>
<dbReference type="InterPro" id="IPR020891">
    <property type="entry name" value="UPF0758_CS"/>
</dbReference>
<dbReference type="InterPro" id="IPR046778">
    <property type="entry name" value="UPF0758_N"/>
</dbReference>
<dbReference type="NCBIfam" id="NF000642">
    <property type="entry name" value="PRK00024.1"/>
    <property type="match status" value="1"/>
</dbReference>
<dbReference type="NCBIfam" id="TIGR00608">
    <property type="entry name" value="radc"/>
    <property type="match status" value="1"/>
</dbReference>
<dbReference type="PANTHER" id="PTHR30471">
    <property type="entry name" value="DNA REPAIR PROTEIN RADC"/>
    <property type="match status" value="1"/>
</dbReference>
<dbReference type="PANTHER" id="PTHR30471:SF3">
    <property type="entry name" value="UPF0758 PROTEIN YEES-RELATED"/>
    <property type="match status" value="1"/>
</dbReference>
<dbReference type="Pfam" id="PF04002">
    <property type="entry name" value="RadC"/>
    <property type="match status" value="1"/>
</dbReference>
<dbReference type="Pfam" id="PF20582">
    <property type="entry name" value="UPF0758_N"/>
    <property type="match status" value="1"/>
</dbReference>
<dbReference type="SUPFAM" id="SSF102712">
    <property type="entry name" value="JAB1/MPN domain"/>
    <property type="match status" value="1"/>
</dbReference>
<dbReference type="SUPFAM" id="SSF47781">
    <property type="entry name" value="RuvA domain 2-like"/>
    <property type="match status" value="1"/>
</dbReference>
<dbReference type="PROSITE" id="PS50249">
    <property type="entry name" value="MPN"/>
    <property type="match status" value="1"/>
</dbReference>
<dbReference type="PROSITE" id="PS01302">
    <property type="entry name" value="UPF0758"/>
    <property type="match status" value="1"/>
</dbReference>
<organism>
    <name type="scientific">Saccharophagus degradans (strain 2-40 / ATCC 43961 / DSM 17024)</name>
    <dbReference type="NCBI Taxonomy" id="203122"/>
    <lineage>
        <taxon>Bacteria</taxon>
        <taxon>Pseudomonadati</taxon>
        <taxon>Pseudomonadota</taxon>
        <taxon>Gammaproteobacteria</taxon>
        <taxon>Cellvibrionales</taxon>
        <taxon>Cellvibrionaceae</taxon>
        <taxon>Saccharophagus</taxon>
    </lineage>
</organism>
<keyword id="KW-0378">Hydrolase</keyword>
<keyword id="KW-0479">Metal-binding</keyword>
<keyword id="KW-0482">Metalloprotease</keyword>
<keyword id="KW-0645">Protease</keyword>
<keyword id="KW-1185">Reference proteome</keyword>
<keyword id="KW-0862">Zinc</keyword>
<gene>
    <name type="ordered locus">Sde_3678</name>
</gene>
<proteinExistence type="inferred from homology"/>
<protein>
    <recommendedName>
        <fullName>UPF0758 protein Sde_3678</fullName>
    </recommendedName>
</protein>
<reference key="1">
    <citation type="journal article" date="2008" name="PLoS Genet.">
        <title>Complete genome sequence of the complex carbohydrate-degrading marine bacterium, Saccharophagus degradans strain 2-40 T.</title>
        <authorList>
            <person name="Weiner R.M."/>
            <person name="Taylor L.E. II"/>
            <person name="Henrissat B."/>
            <person name="Hauser L."/>
            <person name="Land M."/>
            <person name="Coutinho P.M."/>
            <person name="Rancurel C."/>
            <person name="Saunders E.H."/>
            <person name="Longmire A.G."/>
            <person name="Zhang H."/>
            <person name="Bayer E.A."/>
            <person name="Gilbert H.J."/>
            <person name="Larimer F."/>
            <person name="Zhulin I.B."/>
            <person name="Ekborg N.A."/>
            <person name="Lamed R."/>
            <person name="Richardson P.M."/>
            <person name="Borovok I."/>
            <person name="Hutcheson S."/>
        </authorList>
    </citation>
    <scope>NUCLEOTIDE SEQUENCE [LARGE SCALE GENOMIC DNA]</scope>
    <source>
        <strain>2-40 / ATCC 43961 / DSM 17024</strain>
    </source>
</reference>
<accession>Q21EE6</accession>
<comment type="similarity">
    <text evidence="2">Belongs to the UPF0758 family.</text>
</comment>
<feature type="chain" id="PRO_1000001688" description="UPF0758 protein Sde_3678">
    <location>
        <begin position="1"/>
        <end position="224"/>
    </location>
</feature>
<feature type="domain" description="MPN" evidence="1">
    <location>
        <begin position="102"/>
        <end position="224"/>
    </location>
</feature>
<feature type="short sequence motif" description="JAMM motif" evidence="1">
    <location>
        <begin position="173"/>
        <end position="186"/>
    </location>
</feature>
<feature type="binding site" evidence="1">
    <location>
        <position position="173"/>
    </location>
    <ligand>
        <name>Zn(2+)</name>
        <dbReference type="ChEBI" id="CHEBI:29105"/>
        <note>catalytic</note>
    </ligand>
</feature>
<feature type="binding site" evidence="1">
    <location>
        <position position="175"/>
    </location>
    <ligand>
        <name>Zn(2+)</name>
        <dbReference type="ChEBI" id="CHEBI:29105"/>
        <note>catalytic</note>
    </ligand>
</feature>
<feature type="binding site" evidence="1">
    <location>
        <position position="186"/>
    </location>
    <ligand>
        <name>Zn(2+)</name>
        <dbReference type="ChEBI" id="CHEBI:29105"/>
        <note>catalytic</note>
    </ligand>
</feature>
<sequence length="224" mass="24656">MAITDWPIEERPREKLLNRGAHALSDAELLAIFLRTGVKGKSAVDLARELLAYFGGLRPLLEASQQDFCQAQGLGNAKFSQLQAVLEMSRRHLAAALEQKTSLTSTTAVKQFVSAQLRHRQSEVFALILLNTQNQLIKFVELFNGTIDSASVYPREVVKTALSHNAAAVILAHNHPSGIAEPSEPDKAITKRLQQALQLVDIRTLDHLVVGDTEAVSFAERGWI</sequence>